<reference key="1">
    <citation type="journal article" date="2005" name="Nature">
        <title>Genome sequencing and analysis of Aspergillus oryzae.</title>
        <authorList>
            <person name="Machida M."/>
            <person name="Asai K."/>
            <person name="Sano M."/>
            <person name="Tanaka T."/>
            <person name="Kumagai T."/>
            <person name="Terai G."/>
            <person name="Kusumoto K."/>
            <person name="Arima T."/>
            <person name="Akita O."/>
            <person name="Kashiwagi Y."/>
            <person name="Abe K."/>
            <person name="Gomi K."/>
            <person name="Horiuchi H."/>
            <person name="Kitamoto K."/>
            <person name="Kobayashi T."/>
            <person name="Takeuchi M."/>
            <person name="Denning D.W."/>
            <person name="Galagan J.E."/>
            <person name="Nierman W.C."/>
            <person name="Yu J."/>
            <person name="Archer D.B."/>
            <person name="Bennett J.W."/>
            <person name="Bhatnagar D."/>
            <person name="Cleveland T.E."/>
            <person name="Fedorova N.D."/>
            <person name="Gotoh O."/>
            <person name="Horikawa H."/>
            <person name="Hosoyama A."/>
            <person name="Ichinomiya M."/>
            <person name="Igarashi R."/>
            <person name="Iwashita K."/>
            <person name="Juvvadi P.R."/>
            <person name="Kato M."/>
            <person name="Kato Y."/>
            <person name="Kin T."/>
            <person name="Kokubun A."/>
            <person name="Maeda H."/>
            <person name="Maeyama N."/>
            <person name="Maruyama J."/>
            <person name="Nagasaki H."/>
            <person name="Nakajima T."/>
            <person name="Oda K."/>
            <person name="Okada K."/>
            <person name="Paulsen I."/>
            <person name="Sakamoto K."/>
            <person name="Sawano T."/>
            <person name="Takahashi M."/>
            <person name="Takase K."/>
            <person name="Terabayashi Y."/>
            <person name="Wortman J.R."/>
            <person name="Yamada O."/>
            <person name="Yamagata Y."/>
            <person name="Anazawa H."/>
            <person name="Hata Y."/>
            <person name="Koide Y."/>
            <person name="Komori T."/>
            <person name="Koyama Y."/>
            <person name="Minetoki T."/>
            <person name="Suharnan S."/>
            <person name="Tanaka A."/>
            <person name="Isono K."/>
            <person name="Kuhara S."/>
            <person name="Ogasawara N."/>
            <person name="Kikuchi H."/>
        </authorList>
    </citation>
    <scope>NUCLEOTIDE SEQUENCE [LARGE SCALE GENOMIC DNA]</scope>
    <source>
        <strain>ATCC 42149 / RIB 40</strain>
    </source>
</reference>
<comment type="function">
    <text evidence="2">In complex with CCZ1, is required for multiple vacuole delivery pathways including the cytoplasm to vacuole transport (Cvt), autophagy, pexophagy and endocytosis. The MON1-CCZ1 complex acts at the fusion of vesicles with the vacuole, through its regulation of the SNARE complex during the coordinated priming and docking stages of fusion, and particularly at the stage of tethering/docking.</text>
</comment>
<comment type="subcellular location">
    <subcellularLocation>
        <location evidence="1">Endosome</location>
        <location evidence="1">Multivesicular body membrane</location>
        <topology evidence="1">Peripheral membrane protein</topology>
    </subcellularLocation>
    <subcellularLocation>
        <location evidence="1">Prevacuolar compartment membrane</location>
        <topology evidence="1">Peripheral membrane protein</topology>
    </subcellularLocation>
    <subcellularLocation>
        <location evidence="1">Vacuole membrane</location>
        <topology evidence="1">Peripheral membrane protein</topology>
    </subcellularLocation>
</comment>
<comment type="similarity">
    <text evidence="4">Belongs to the MON1/SAND family.</text>
</comment>
<feature type="chain" id="PRO_0000278854" description="Vacuolar fusion protein mon1">
    <location>
        <begin position="1"/>
        <end position="628"/>
    </location>
</feature>
<feature type="region of interest" description="Disordered" evidence="3">
    <location>
        <begin position="1"/>
        <end position="141"/>
    </location>
</feature>
<feature type="compositionally biased region" description="Polar residues" evidence="3">
    <location>
        <begin position="1"/>
        <end position="13"/>
    </location>
</feature>
<feature type="compositionally biased region" description="Low complexity" evidence="3">
    <location>
        <begin position="26"/>
        <end position="37"/>
    </location>
</feature>
<feature type="compositionally biased region" description="Pro residues" evidence="3">
    <location>
        <begin position="46"/>
        <end position="56"/>
    </location>
</feature>
<feature type="compositionally biased region" description="Low complexity" evidence="3">
    <location>
        <begin position="57"/>
        <end position="79"/>
    </location>
</feature>
<feature type="compositionally biased region" description="Polar residues" evidence="3">
    <location>
        <begin position="80"/>
        <end position="89"/>
    </location>
</feature>
<feature type="compositionally biased region" description="Polar residues" evidence="3">
    <location>
        <begin position="129"/>
        <end position="141"/>
    </location>
</feature>
<proteinExistence type="inferred from homology"/>
<organism>
    <name type="scientific">Aspergillus oryzae (strain ATCC 42149 / RIB 40)</name>
    <name type="common">Yellow koji mold</name>
    <dbReference type="NCBI Taxonomy" id="510516"/>
    <lineage>
        <taxon>Eukaryota</taxon>
        <taxon>Fungi</taxon>
        <taxon>Dikarya</taxon>
        <taxon>Ascomycota</taxon>
        <taxon>Pezizomycotina</taxon>
        <taxon>Eurotiomycetes</taxon>
        <taxon>Eurotiomycetidae</taxon>
        <taxon>Eurotiales</taxon>
        <taxon>Aspergillaceae</taxon>
        <taxon>Aspergillus</taxon>
        <taxon>Aspergillus subgen. Circumdati</taxon>
    </lineage>
</organism>
<dbReference type="EMBL" id="BA000050">
    <property type="protein sequence ID" value="BAE57504.1"/>
    <property type="molecule type" value="Genomic_DNA"/>
</dbReference>
<dbReference type="SMR" id="Q2ULR1"/>
<dbReference type="STRING" id="510516.Q2ULR1"/>
<dbReference type="EnsemblFungi" id="BAE57504">
    <property type="protein sequence ID" value="BAE57504"/>
    <property type="gene ID" value="AO090003000303"/>
</dbReference>
<dbReference type="HOGENOM" id="CLU_014574_5_0_1"/>
<dbReference type="OMA" id="QQPFNAK"/>
<dbReference type="Proteomes" id="UP000006564">
    <property type="component" value="Chromosome 2"/>
</dbReference>
<dbReference type="GO" id="GO:0000329">
    <property type="term" value="C:fungal-type vacuole membrane"/>
    <property type="evidence" value="ECO:0007669"/>
    <property type="project" value="TreeGrafter"/>
</dbReference>
<dbReference type="GO" id="GO:0035658">
    <property type="term" value="C:Mon1-Ccz1 complex"/>
    <property type="evidence" value="ECO:0007669"/>
    <property type="project" value="TreeGrafter"/>
</dbReference>
<dbReference type="GO" id="GO:0032585">
    <property type="term" value="C:multivesicular body membrane"/>
    <property type="evidence" value="ECO:0007669"/>
    <property type="project" value="UniProtKB-SubCell"/>
</dbReference>
<dbReference type="GO" id="GO:0006914">
    <property type="term" value="P:autophagy"/>
    <property type="evidence" value="ECO:0007669"/>
    <property type="project" value="UniProtKB-KW"/>
</dbReference>
<dbReference type="GO" id="GO:0006623">
    <property type="term" value="P:protein targeting to vacuole"/>
    <property type="evidence" value="ECO:0007669"/>
    <property type="project" value="InterPro"/>
</dbReference>
<dbReference type="GO" id="GO:0016192">
    <property type="term" value="P:vesicle-mediated transport"/>
    <property type="evidence" value="ECO:0007669"/>
    <property type="project" value="InterPro"/>
</dbReference>
<dbReference type="InterPro" id="IPR043972">
    <property type="entry name" value="FUZ/MON1/HPS1_longin_1"/>
</dbReference>
<dbReference type="InterPro" id="IPR043971">
    <property type="entry name" value="FUZ/MON1/HPS1_longin_2"/>
</dbReference>
<dbReference type="InterPro" id="IPR043970">
    <property type="entry name" value="FUZ/MON1/HPS1_longin_3"/>
</dbReference>
<dbReference type="InterPro" id="IPR004353">
    <property type="entry name" value="Mon1"/>
</dbReference>
<dbReference type="PANTHER" id="PTHR13027">
    <property type="entry name" value="SAND PROTEIN-RELATED"/>
    <property type="match status" value="1"/>
</dbReference>
<dbReference type="PANTHER" id="PTHR13027:SF7">
    <property type="entry name" value="VACUOLAR FUSION PROTEIN MON1 HOMOLOG"/>
    <property type="match status" value="1"/>
</dbReference>
<dbReference type="Pfam" id="PF19036">
    <property type="entry name" value="Fuz_longin_1"/>
    <property type="match status" value="1"/>
</dbReference>
<dbReference type="Pfam" id="PF19037">
    <property type="entry name" value="Fuz_longin_2"/>
    <property type="match status" value="1"/>
</dbReference>
<dbReference type="Pfam" id="PF19038">
    <property type="entry name" value="Fuz_longin_3"/>
    <property type="match status" value="1"/>
</dbReference>
<dbReference type="PRINTS" id="PR01546">
    <property type="entry name" value="YEAST73DUF"/>
</dbReference>
<protein>
    <recommendedName>
        <fullName>Vacuolar fusion protein mon1</fullName>
    </recommendedName>
</protein>
<gene>
    <name type="primary">mon1</name>
    <name type="ORF">AO090003000303</name>
</gene>
<accession>Q2ULR1</accession>
<name>MON1_ASPOR</name>
<keyword id="KW-0072">Autophagy</keyword>
<keyword id="KW-0967">Endosome</keyword>
<keyword id="KW-0472">Membrane</keyword>
<keyword id="KW-0653">Protein transport</keyword>
<keyword id="KW-1185">Reference proteome</keyword>
<keyword id="KW-0813">Transport</keyword>
<keyword id="KW-0926">Vacuole</keyword>
<sequence>MDSEIKNQLQDSLGGNDDSKDDITCSSKSSPTMAASSVRERSTSPEGPPPPLPPRPNTLNLLDEGASSSRTLRQSTQSALQSRATTAVSLTDIASHDGGKESYPARGLPGTLRAKASLSHLASPRGSDTADSASVKSSVPQTDFGEVENVFSDFVATESGPMQHDSTGLLQFPEFQADDVDDDFTEEFEPVGDVGDEGENEVLENWKSKRKHYLILSAAGKPIWTRHGDGGLISTYIGVIQTIISFYEDSQDRLNSFTAGDTKFVIVAKGPLYLVAISRILESETQLKLQLEALYMQILSTLTLPSLTHLFSVRPSTDLKRPLQGSETLLSTLADSFTKGSPSTLLSALECLKIRKAHRQTINNALLKTRTNSLLYGLVVAGGRLVSVVRPRKHSLHPGDLQLIFNMVFEAEAVKAGGGESWIPVCLPGFNSSGYLYMYVSFVDLREDAGNVADDTATKEESVAVILISTDKERFFELQEMRNSFIEQLEKDGSLKIMKEAIDKGRPKTTDIVPGTVLHHFLYKSRGNVQFTMSSYEPDFSSVSRRRRLMSTYNNLHASIHSKHAHVRVHHCVSQSSTSLAWVTPVFQLYCVAGPNANRNALAHSASKIVQWVQQEEERLFIIGGAVF</sequence>
<evidence type="ECO:0000250" key="1"/>
<evidence type="ECO:0000250" key="2">
    <source>
        <dbReference type="UniProtKB" id="P53129"/>
    </source>
</evidence>
<evidence type="ECO:0000256" key="3">
    <source>
        <dbReference type="SAM" id="MobiDB-lite"/>
    </source>
</evidence>
<evidence type="ECO:0000305" key="4"/>